<comment type="function">
    <text evidence="1">Catalyzes the reductive methylation of 2'-deoxyuridine-5'-monophosphate (dUMP) to 2'-deoxythymidine-5'-monophosphate (dTMP) while utilizing 5,10-methylenetetrahydrofolate (mTHF) as the methyl donor and reductant in the reaction, yielding dihydrofolate (DHF) as a by-product. This enzymatic reaction provides an intracellular de novo source of dTMP, an essential precursor for DNA biosynthesis.</text>
</comment>
<comment type="catalytic activity">
    <reaction evidence="1">
        <text>dUMP + (6R)-5,10-methylene-5,6,7,8-tetrahydrofolate = 7,8-dihydrofolate + dTMP</text>
        <dbReference type="Rhea" id="RHEA:12104"/>
        <dbReference type="ChEBI" id="CHEBI:15636"/>
        <dbReference type="ChEBI" id="CHEBI:57451"/>
        <dbReference type="ChEBI" id="CHEBI:63528"/>
        <dbReference type="ChEBI" id="CHEBI:246422"/>
        <dbReference type="EC" id="2.1.1.45"/>
    </reaction>
</comment>
<comment type="pathway">
    <text evidence="1">Pyrimidine metabolism; dTTP biosynthesis.</text>
</comment>
<comment type="subunit">
    <text evidence="1">Homodimer.</text>
</comment>
<comment type="subcellular location">
    <subcellularLocation>
        <location evidence="1">Cytoplasm</location>
    </subcellularLocation>
</comment>
<comment type="similarity">
    <text evidence="1">Belongs to the thymidylate synthase family. Bacterial-type ThyA subfamily.</text>
</comment>
<organism>
    <name type="scientific">Brucella suis (strain ATCC 23445 / NCTC 10510)</name>
    <dbReference type="NCBI Taxonomy" id="470137"/>
    <lineage>
        <taxon>Bacteria</taxon>
        <taxon>Pseudomonadati</taxon>
        <taxon>Pseudomonadota</taxon>
        <taxon>Alphaproteobacteria</taxon>
        <taxon>Hyphomicrobiales</taxon>
        <taxon>Brucellaceae</taxon>
        <taxon>Brucella/Ochrobactrum group</taxon>
        <taxon>Brucella</taxon>
    </lineage>
</organism>
<gene>
    <name evidence="1" type="primary">thyA</name>
    <name type="ordered locus">BSUIS_A1450</name>
</gene>
<accession>B0CHI7</accession>
<sequence>MRTYLDLLQHVLDHGVDRDDRTGTGTRSVFGYQMRFDLEEGFPVLTTKKLHLRSIIHELLWFLKGDTNIAYLKENGVTIWDEWADENGDLGPVYGYQWRSWPAPDGRHIDQIANLLKMLHTNPQSRRLIVSAWNPALVDEMALPPCHCLFQFYVANGRLSCQLYQRSADIFLGVPFNIASYALLTMMIAQVTGLKPGEFIHTLGDAHIYSNHFEQARLQLTRTPKKLPVMHINPDVKDLFAFRFEDFRLDGYEADPTIKAPIAV</sequence>
<proteinExistence type="inferred from homology"/>
<feature type="chain" id="PRO_1000073870" description="Thymidylate synthase">
    <location>
        <begin position="1"/>
        <end position="264"/>
    </location>
</feature>
<feature type="active site" description="Nucleophile" evidence="1">
    <location>
        <position position="146"/>
    </location>
</feature>
<feature type="binding site" description="in other chain" evidence="1">
    <location>
        <position position="21"/>
    </location>
    <ligand>
        <name>dUMP</name>
        <dbReference type="ChEBI" id="CHEBI:246422"/>
        <note>ligand shared between dimeric partners</note>
    </ligand>
</feature>
<feature type="binding site" evidence="1">
    <location>
        <position position="51"/>
    </location>
    <ligand>
        <name>(6R)-5,10-methylene-5,6,7,8-tetrahydrofolate</name>
        <dbReference type="ChEBI" id="CHEBI:15636"/>
    </ligand>
</feature>
<feature type="binding site" evidence="1">
    <location>
        <begin position="126"/>
        <end position="127"/>
    </location>
    <ligand>
        <name>dUMP</name>
        <dbReference type="ChEBI" id="CHEBI:246422"/>
        <note>ligand shared between dimeric partners</note>
    </ligand>
</feature>
<feature type="binding site" description="in other chain" evidence="1">
    <location>
        <begin position="166"/>
        <end position="169"/>
    </location>
    <ligand>
        <name>dUMP</name>
        <dbReference type="ChEBI" id="CHEBI:246422"/>
        <note>ligand shared between dimeric partners</note>
    </ligand>
</feature>
<feature type="binding site" evidence="1">
    <location>
        <position position="169"/>
    </location>
    <ligand>
        <name>(6R)-5,10-methylene-5,6,7,8-tetrahydrofolate</name>
        <dbReference type="ChEBI" id="CHEBI:15636"/>
    </ligand>
</feature>
<feature type="binding site" description="in other chain" evidence="1">
    <location>
        <position position="177"/>
    </location>
    <ligand>
        <name>dUMP</name>
        <dbReference type="ChEBI" id="CHEBI:246422"/>
        <note>ligand shared between dimeric partners</note>
    </ligand>
</feature>
<feature type="binding site" description="in other chain" evidence="1">
    <location>
        <begin position="207"/>
        <end position="209"/>
    </location>
    <ligand>
        <name>dUMP</name>
        <dbReference type="ChEBI" id="CHEBI:246422"/>
        <note>ligand shared between dimeric partners</note>
    </ligand>
</feature>
<feature type="binding site" evidence="1">
    <location>
        <position position="263"/>
    </location>
    <ligand>
        <name>(6R)-5,10-methylene-5,6,7,8-tetrahydrofolate</name>
        <dbReference type="ChEBI" id="CHEBI:15636"/>
    </ligand>
</feature>
<name>TYSY_BRUSI</name>
<keyword id="KW-0963">Cytoplasm</keyword>
<keyword id="KW-0489">Methyltransferase</keyword>
<keyword id="KW-0545">Nucleotide biosynthesis</keyword>
<keyword id="KW-0808">Transferase</keyword>
<evidence type="ECO:0000255" key="1">
    <source>
        <dbReference type="HAMAP-Rule" id="MF_00008"/>
    </source>
</evidence>
<protein>
    <recommendedName>
        <fullName evidence="1">Thymidylate synthase</fullName>
        <shortName evidence="1">TS</shortName>
        <shortName evidence="1">TSase</shortName>
        <ecNumber evidence="1">2.1.1.45</ecNumber>
    </recommendedName>
</protein>
<dbReference type="EC" id="2.1.1.45" evidence="1"/>
<dbReference type="EMBL" id="CP000911">
    <property type="protein sequence ID" value="ABY38488.1"/>
    <property type="molecule type" value="Genomic_DNA"/>
</dbReference>
<dbReference type="RefSeq" id="WP_002964508.1">
    <property type="nucleotide sequence ID" value="NC_010169.1"/>
</dbReference>
<dbReference type="SMR" id="B0CHI7"/>
<dbReference type="KEGG" id="bmt:BSUIS_A1450"/>
<dbReference type="HOGENOM" id="CLU_021669_0_0_5"/>
<dbReference type="UniPathway" id="UPA00575"/>
<dbReference type="Proteomes" id="UP000008545">
    <property type="component" value="Chromosome I"/>
</dbReference>
<dbReference type="GO" id="GO:0005829">
    <property type="term" value="C:cytosol"/>
    <property type="evidence" value="ECO:0007669"/>
    <property type="project" value="TreeGrafter"/>
</dbReference>
<dbReference type="GO" id="GO:0004799">
    <property type="term" value="F:thymidylate synthase activity"/>
    <property type="evidence" value="ECO:0007669"/>
    <property type="project" value="UniProtKB-UniRule"/>
</dbReference>
<dbReference type="GO" id="GO:0006231">
    <property type="term" value="P:dTMP biosynthetic process"/>
    <property type="evidence" value="ECO:0007669"/>
    <property type="project" value="UniProtKB-UniRule"/>
</dbReference>
<dbReference type="GO" id="GO:0006235">
    <property type="term" value="P:dTTP biosynthetic process"/>
    <property type="evidence" value="ECO:0007669"/>
    <property type="project" value="UniProtKB-UniRule"/>
</dbReference>
<dbReference type="GO" id="GO:0032259">
    <property type="term" value="P:methylation"/>
    <property type="evidence" value="ECO:0007669"/>
    <property type="project" value="UniProtKB-KW"/>
</dbReference>
<dbReference type="CDD" id="cd00351">
    <property type="entry name" value="TS_Pyrimidine_HMase"/>
    <property type="match status" value="1"/>
</dbReference>
<dbReference type="FunFam" id="3.30.572.10:FF:000001">
    <property type="entry name" value="Thymidylate synthase"/>
    <property type="match status" value="1"/>
</dbReference>
<dbReference type="Gene3D" id="3.30.572.10">
    <property type="entry name" value="Thymidylate synthase/dCMP hydroxymethylase domain"/>
    <property type="match status" value="1"/>
</dbReference>
<dbReference type="HAMAP" id="MF_00008">
    <property type="entry name" value="Thymidy_synth_bact"/>
    <property type="match status" value="1"/>
</dbReference>
<dbReference type="InterPro" id="IPR045097">
    <property type="entry name" value="Thymidate_synth/dCMP_Mease"/>
</dbReference>
<dbReference type="InterPro" id="IPR023451">
    <property type="entry name" value="Thymidate_synth/dCMP_Mease_dom"/>
</dbReference>
<dbReference type="InterPro" id="IPR036926">
    <property type="entry name" value="Thymidate_synth/dCMP_Mease_sf"/>
</dbReference>
<dbReference type="InterPro" id="IPR000398">
    <property type="entry name" value="Thymidylate_synthase"/>
</dbReference>
<dbReference type="InterPro" id="IPR020940">
    <property type="entry name" value="Thymidylate_synthase_AS"/>
</dbReference>
<dbReference type="NCBIfam" id="NF002497">
    <property type="entry name" value="PRK01827.1-3"/>
    <property type="match status" value="1"/>
</dbReference>
<dbReference type="NCBIfam" id="NF002499">
    <property type="entry name" value="PRK01827.1-5"/>
    <property type="match status" value="1"/>
</dbReference>
<dbReference type="NCBIfam" id="TIGR03284">
    <property type="entry name" value="thym_sym"/>
    <property type="match status" value="2"/>
</dbReference>
<dbReference type="PANTHER" id="PTHR11548:SF9">
    <property type="entry name" value="THYMIDYLATE SYNTHASE"/>
    <property type="match status" value="1"/>
</dbReference>
<dbReference type="PANTHER" id="PTHR11548">
    <property type="entry name" value="THYMIDYLATE SYNTHASE 1"/>
    <property type="match status" value="1"/>
</dbReference>
<dbReference type="Pfam" id="PF00303">
    <property type="entry name" value="Thymidylat_synt"/>
    <property type="match status" value="1"/>
</dbReference>
<dbReference type="PRINTS" id="PR00108">
    <property type="entry name" value="THYMDSNTHASE"/>
</dbReference>
<dbReference type="SUPFAM" id="SSF55831">
    <property type="entry name" value="Thymidylate synthase/dCMP hydroxymethylase"/>
    <property type="match status" value="1"/>
</dbReference>
<dbReference type="PROSITE" id="PS00091">
    <property type="entry name" value="THYMIDYLATE_SYNTHASE"/>
    <property type="match status" value="1"/>
</dbReference>
<reference key="1">
    <citation type="submission" date="2007-12" db="EMBL/GenBank/DDBJ databases">
        <title>Brucella suis ATCC 23445 whole genome shotgun sequencing project.</title>
        <authorList>
            <person name="Setubal J.C."/>
            <person name="Bowns C."/>
            <person name="Boyle S."/>
            <person name="Crasta O.R."/>
            <person name="Czar M.J."/>
            <person name="Dharmanolla C."/>
            <person name="Gillespie J.J."/>
            <person name="Kenyon R.W."/>
            <person name="Lu J."/>
            <person name="Mane S."/>
            <person name="Mohapatra S."/>
            <person name="Nagrani S."/>
            <person name="Purkayastha A."/>
            <person name="Rajasimha H.K."/>
            <person name="Shallom J.M."/>
            <person name="Shallom S."/>
            <person name="Shukla M."/>
            <person name="Snyder E.E."/>
            <person name="Sobral B.W."/>
            <person name="Wattam A.R."/>
            <person name="Will R."/>
            <person name="Williams K."/>
            <person name="Yoo H."/>
            <person name="Bruce D."/>
            <person name="Detter C."/>
            <person name="Munk C."/>
            <person name="Brettin T.S."/>
        </authorList>
    </citation>
    <scope>NUCLEOTIDE SEQUENCE [LARGE SCALE GENOMIC DNA]</scope>
    <source>
        <strain>ATCC 23445 / NCTC 10510</strain>
    </source>
</reference>